<dbReference type="EMBL" id="AY073164">
    <property type="protein sequence ID" value="AAL60827.1"/>
    <property type="molecule type" value="Genomic_DNA"/>
</dbReference>
<dbReference type="EMBL" id="AY317584">
    <property type="protein sequence ID" value="AAP70980.1"/>
    <property type="molecule type" value="Genomic_DNA"/>
</dbReference>
<dbReference type="CCDS" id="CCDS21698.1"/>
<dbReference type="RefSeq" id="NP_667135.1">
    <property type="nucleotide sequence ID" value="NM_146924.1"/>
</dbReference>
<dbReference type="SMR" id="Q8VGI4"/>
<dbReference type="FunCoup" id="Q8VGI4">
    <property type="interactions" value="1126"/>
</dbReference>
<dbReference type="STRING" id="10090.ENSMUSP00000149760"/>
<dbReference type="GlyCosmos" id="Q8VGI4">
    <property type="glycosylation" value="2 sites, No reported glycans"/>
</dbReference>
<dbReference type="GlyGen" id="Q8VGI4">
    <property type="glycosylation" value="2 sites"/>
</dbReference>
<dbReference type="PaxDb" id="10090-ENSMUSP00000076485"/>
<dbReference type="Ensembl" id="ENSMUST00000077249.3">
    <property type="protein sequence ID" value="ENSMUSP00000076485.3"/>
    <property type="gene ID" value="ENSMUSG00000095301.3"/>
</dbReference>
<dbReference type="Ensembl" id="ENSMUST00000217173.2">
    <property type="protein sequence ID" value="ENSMUSP00000149760.2"/>
    <property type="gene ID" value="ENSMUSG00000095301.3"/>
</dbReference>
<dbReference type="GeneID" id="258926"/>
<dbReference type="KEGG" id="mmu:258926"/>
<dbReference type="UCSC" id="uc009jbr.1">
    <property type="organism name" value="mouse"/>
</dbReference>
<dbReference type="AGR" id="MGI:3030310"/>
<dbReference type="CTD" id="258926"/>
<dbReference type="MGI" id="MGI:3030310">
    <property type="gene designation" value="Or5p55"/>
</dbReference>
<dbReference type="VEuPathDB" id="HostDB:ENSMUSG00000095301"/>
<dbReference type="eggNOG" id="ENOG502SKA1">
    <property type="taxonomic scope" value="Eukaryota"/>
</dbReference>
<dbReference type="GeneTree" id="ENSGT01130000278279"/>
<dbReference type="HOGENOM" id="CLU_012526_1_0_1"/>
<dbReference type="InParanoid" id="Q8VGI4"/>
<dbReference type="OMA" id="AQMCSAA"/>
<dbReference type="OrthoDB" id="9598168at2759"/>
<dbReference type="PhylomeDB" id="Q8VGI4"/>
<dbReference type="TreeFam" id="TF338848"/>
<dbReference type="BioGRID-ORCS" id="258926">
    <property type="hits" value="1 hit in 38 CRISPR screens"/>
</dbReference>
<dbReference type="PRO" id="PR:Q8VGI4"/>
<dbReference type="Proteomes" id="UP000000589">
    <property type="component" value="Chromosome 7"/>
</dbReference>
<dbReference type="RNAct" id="Q8VGI4">
    <property type="molecule type" value="protein"/>
</dbReference>
<dbReference type="Bgee" id="ENSMUSG00000095301">
    <property type="expression patterns" value="Expressed in epithelium and 15 other cell types or tissues"/>
</dbReference>
<dbReference type="GO" id="GO:0016020">
    <property type="term" value="C:membrane"/>
    <property type="evidence" value="ECO:0000247"/>
    <property type="project" value="MGI"/>
</dbReference>
<dbReference type="GO" id="GO:0005886">
    <property type="term" value="C:plasma membrane"/>
    <property type="evidence" value="ECO:0007669"/>
    <property type="project" value="UniProtKB-SubCell"/>
</dbReference>
<dbReference type="GO" id="GO:0004930">
    <property type="term" value="F:G protein-coupled receptor activity"/>
    <property type="evidence" value="ECO:0007669"/>
    <property type="project" value="UniProtKB-KW"/>
</dbReference>
<dbReference type="GO" id="GO:0004984">
    <property type="term" value="F:olfactory receptor activity"/>
    <property type="evidence" value="ECO:0000247"/>
    <property type="project" value="MGI"/>
</dbReference>
<dbReference type="GO" id="GO:0007186">
    <property type="term" value="P:G protein-coupled receptor signaling pathway"/>
    <property type="evidence" value="ECO:0000247"/>
    <property type="project" value="MGI"/>
</dbReference>
<dbReference type="GO" id="GO:0007608">
    <property type="term" value="P:sensory perception of smell"/>
    <property type="evidence" value="ECO:0000247"/>
    <property type="project" value="MGI"/>
</dbReference>
<dbReference type="FunFam" id="1.20.1070.10:FF:000004">
    <property type="entry name" value="Olfactory receptor"/>
    <property type="match status" value="1"/>
</dbReference>
<dbReference type="Gene3D" id="1.20.1070.10">
    <property type="entry name" value="Rhodopsin 7-helix transmembrane proteins"/>
    <property type="match status" value="1"/>
</dbReference>
<dbReference type="InterPro" id="IPR000276">
    <property type="entry name" value="GPCR_Rhodpsn"/>
</dbReference>
<dbReference type="InterPro" id="IPR017452">
    <property type="entry name" value="GPCR_Rhodpsn_7TM"/>
</dbReference>
<dbReference type="InterPro" id="IPR000725">
    <property type="entry name" value="Olfact_rcpt"/>
</dbReference>
<dbReference type="PANTHER" id="PTHR48018">
    <property type="entry name" value="OLFACTORY RECEPTOR"/>
    <property type="match status" value="1"/>
</dbReference>
<dbReference type="Pfam" id="PF13853">
    <property type="entry name" value="7tm_4"/>
    <property type="match status" value="1"/>
</dbReference>
<dbReference type="PRINTS" id="PR00237">
    <property type="entry name" value="GPCRRHODOPSN"/>
</dbReference>
<dbReference type="PRINTS" id="PR00245">
    <property type="entry name" value="OLFACTORYR"/>
</dbReference>
<dbReference type="SUPFAM" id="SSF81321">
    <property type="entry name" value="Family A G protein-coupled receptor-like"/>
    <property type="match status" value="1"/>
</dbReference>
<dbReference type="PROSITE" id="PS00237">
    <property type="entry name" value="G_PROTEIN_RECEP_F1_1"/>
    <property type="match status" value="1"/>
</dbReference>
<dbReference type="PROSITE" id="PS50262">
    <property type="entry name" value="G_PROTEIN_RECEP_F1_2"/>
    <property type="match status" value="1"/>
</dbReference>
<sequence length="310" mass="34193">METQNHTTVTEFILLGLTESSTLRVILFMVFLGIYTVTLVGNFSIISLIRSCPQLHTPMYLFLSHLAFVDIGFSTSITPTMFKGFLGNRLVLSVAACIAQFCITVTFGTVECFLLAVMAYDRYVAICSPLLYSTHMSPRICFLLVGASYVGGCVNSGAFTSCLSILSFCGPNQIDHFFCDFPAVLKLSCSDVSIIGIIPSISAGSIIVITVFVIAVSYAYILITILKMRSTEGRQKAFSTCTSHLTAVTLYYGTITFIYVMPKSNYSTAQNKILSVFYTVVIPMLNPLIYSLRNRDVKEALRKAIIRIFP</sequence>
<keyword id="KW-1003">Cell membrane</keyword>
<keyword id="KW-1015">Disulfide bond</keyword>
<keyword id="KW-0297">G-protein coupled receptor</keyword>
<keyword id="KW-0325">Glycoprotein</keyword>
<keyword id="KW-0472">Membrane</keyword>
<keyword id="KW-0552">Olfaction</keyword>
<keyword id="KW-0675">Receptor</keyword>
<keyword id="KW-1185">Reference proteome</keyword>
<keyword id="KW-0716">Sensory transduction</keyword>
<keyword id="KW-0807">Transducer</keyword>
<keyword id="KW-0812">Transmembrane</keyword>
<keyword id="KW-1133">Transmembrane helix</keyword>
<comment type="function">
    <text>Potential odorant receptor.</text>
</comment>
<comment type="subcellular location">
    <subcellularLocation>
        <location evidence="3">Cell membrane</location>
        <topology evidence="1">Multi-pass membrane protein</topology>
    </subcellularLocation>
</comment>
<comment type="similarity">
    <text evidence="2">Belongs to the G-protein coupled receptor 1 family.</text>
</comment>
<feature type="chain" id="PRO_0000150835" description="Olfactory receptor 5P55">
    <location>
        <begin position="1"/>
        <end position="310"/>
    </location>
</feature>
<feature type="topological domain" description="Extracellular" evidence="1">
    <location>
        <begin position="1"/>
        <end position="25"/>
    </location>
</feature>
<feature type="transmembrane region" description="Helical; Name=1" evidence="1">
    <location>
        <begin position="26"/>
        <end position="46"/>
    </location>
</feature>
<feature type="topological domain" description="Cytoplasmic" evidence="1">
    <location>
        <begin position="47"/>
        <end position="54"/>
    </location>
</feature>
<feature type="transmembrane region" description="Helical; Name=2" evidence="1">
    <location>
        <begin position="55"/>
        <end position="75"/>
    </location>
</feature>
<feature type="topological domain" description="Extracellular" evidence="1">
    <location>
        <begin position="76"/>
        <end position="99"/>
    </location>
</feature>
<feature type="transmembrane region" description="Helical; Name=3" evidence="1">
    <location>
        <begin position="100"/>
        <end position="120"/>
    </location>
</feature>
<feature type="topological domain" description="Cytoplasmic" evidence="1">
    <location>
        <begin position="121"/>
        <end position="133"/>
    </location>
</feature>
<feature type="transmembrane region" description="Helical; Name=4" evidence="1">
    <location>
        <begin position="134"/>
        <end position="154"/>
    </location>
</feature>
<feature type="topological domain" description="Extracellular" evidence="1">
    <location>
        <begin position="155"/>
        <end position="196"/>
    </location>
</feature>
<feature type="transmembrane region" description="Helical; Name=5" evidence="1">
    <location>
        <begin position="197"/>
        <end position="217"/>
    </location>
</feature>
<feature type="topological domain" description="Cytoplasmic" evidence="1">
    <location>
        <begin position="218"/>
        <end position="237"/>
    </location>
</feature>
<feature type="transmembrane region" description="Helical; Name=6" evidence="1">
    <location>
        <begin position="238"/>
        <end position="258"/>
    </location>
</feature>
<feature type="topological domain" description="Extracellular" evidence="1">
    <location>
        <begin position="259"/>
        <end position="271"/>
    </location>
</feature>
<feature type="transmembrane region" description="Helical; Name=7" evidence="1">
    <location>
        <begin position="272"/>
        <end position="292"/>
    </location>
</feature>
<feature type="topological domain" description="Cytoplasmic" evidence="1">
    <location>
        <begin position="293"/>
        <end position="310"/>
    </location>
</feature>
<feature type="glycosylation site" description="N-linked (GlcNAc...) asparagine" evidence="1">
    <location>
        <position position="5"/>
    </location>
</feature>
<feature type="glycosylation site" description="N-linked (GlcNAc...) asparagine" evidence="1">
    <location>
        <position position="265"/>
    </location>
</feature>
<feature type="disulfide bond" evidence="2">
    <location>
        <begin position="97"/>
        <end position="189"/>
    </location>
</feature>
<gene>
    <name evidence="4" type="primary">Or5p55</name>
    <name evidence="4" type="synonym">Mor204-3</name>
    <name evidence="4" type="synonym">Olfr476</name>
</gene>
<name>O5P55_MOUSE</name>
<accession>Q8VGI4</accession>
<reference key="1">
    <citation type="journal article" date="2002" name="Nat. Neurosci.">
        <title>The olfactory receptor gene superfamily of the mouse.</title>
        <authorList>
            <person name="Zhang X."/>
            <person name="Firestein S."/>
        </authorList>
    </citation>
    <scope>NUCLEOTIDE SEQUENCE [GENOMIC DNA]</scope>
</reference>
<reference key="2">
    <citation type="journal article" date="2002" name="Hum. Mol. Genet.">
        <title>Different evolutionary processes shaped the mouse and human olfactory receptor gene families.</title>
        <authorList>
            <person name="Young J.M."/>
            <person name="Friedman C."/>
            <person name="Williams E.M."/>
            <person name="Ross J.A."/>
            <person name="Tonnes-Priddy L."/>
            <person name="Trask B.J."/>
        </authorList>
    </citation>
    <scope>NUCLEOTIDE SEQUENCE [GENOMIC DNA]</scope>
</reference>
<reference key="3">
    <citation type="journal article" date="2002" name="Hum. Mol. Genet.">
        <authorList>
            <person name="Young J.M."/>
            <person name="Friedman C."/>
            <person name="Williams E.M."/>
            <person name="Ross J.A."/>
            <person name="Tonnes-Priddy L."/>
            <person name="Trask B.J."/>
        </authorList>
    </citation>
    <scope>ERRATUM OF PUBMED:11875048</scope>
</reference>
<protein>
    <recommendedName>
        <fullName evidence="3">Olfactory receptor 5P55</fullName>
    </recommendedName>
    <alternativeName>
        <fullName>Olfactory receptor 204-3</fullName>
    </alternativeName>
    <alternativeName>
        <fullName>Olfactory receptor 476</fullName>
    </alternativeName>
</protein>
<organism>
    <name type="scientific">Mus musculus</name>
    <name type="common">Mouse</name>
    <dbReference type="NCBI Taxonomy" id="10090"/>
    <lineage>
        <taxon>Eukaryota</taxon>
        <taxon>Metazoa</taxon>
        <taxon>Chordata</taxon>
        <taxon>Craniata</taxon>
        <taxon>Vertebrata</taxon>
        <taxon>Euteleostomi</taxon>
        <taxon>Mammalia</taxon>
        <taxon>Eutheria</taxon>
        <taxon>Euarchontoglires</taxon>
        <taxon>Glires</taxon>
        <taxon>Rodentia</taxon>
        <taxon>Myomorpha</taxon>
        <taxon>Muroidea</taxon>
        <taxon>Muridae</taxon>
        <taxon>Murinae</taxon>
        <taxon>Mus</taxon>
        <taxon>Mus</taxon>
    </lineage>
</organism>
<evidence type="ECO:0000255" key="1"/>
<evidence type="ECO:0000255" key="2">
    <source>
        <dbReference type="PROSITE-ProRule" id="PRU00521"/>
    </source>
</evidence>
<evidence type="ECO:0000305" key="3"/>
<evidence type="ECO:0000312" key="4">
    <source>
        <dbReference type="MGI" id="MGI:3030310"/>
    </source>
</evidence>
<proteinExistence type="inferred from homology"/>